<dbReference type="EMBL" id="AF038952">
    <property type="protein sequence ID" value="AAC39866.1"/>
    <property type="molecule type" value="mRNA"/>
</dbReference>
<dbReference type="EMBL" id="BT007354">
    <property type="protein sequence ID" value="AAP36018.1"/>
    <property type="molecule type" value="mRNA"/>
</dbReference>
<dbReference type="EMBL" id="AK300031">
    <property type="protein sequence ID" value="BAG61842.1"/>
    <property type="molecule type" value="mRNA"/>
</dbReference>
<dbReference type="EMBL" id="AC026717">
    <property type="status" value="NOT_ANNOTATED_CDS"/>
    <property type="molecule type" value="Genomic_DNA"/>
</dbReference>
<dbReference type="EMBL" id="AC035147">
    <property type="status" value="NOT_ANNOTATED_CDS"/>
    <property type="molecule type" value="Genomic_DNA"/>
</dbReference>
<dbReference type="EMBL" id="AC108482">
    <property type="status" value="NOT_ANNOTATED_CDS"/>
    <property type="molecule type" value="Genomic_DNA"/>
</dbReference>
<dbReference type="EMBL" id="BC018210">
    <property type="protein sequence ID" value="AAH18210.1"/>
    <property type="molecule type" value="mRNA"/>
</dbReference>
<dbReference type="CCDS" id="CCDS4040.1">
    <molecule id="O75347-1"/>
</dbReference>
<dbReference type="CCDS" id="CCDS75263.1">
    <molecule id="O75347-2"/>
</dbReference>
<dbReference type="RefSeq" id="NP_001284667.1">
    <molecule id="O75347-2"/>
    <property type="nucleotide sequence ID" value="NM_001297738.2"/>
</dbReference>
<dbReference type="RefSeq" id="NP_004598.1">
    <molecule id="O75347-1"/>
    <property type="nucleotide sequence ID" value="NM_004607.3"/>
</dbReference>
<dbReference type="PDB" id="1H7C">
    <property type="method" value="X-ray"/>
    <property type="resolution" value="1.80 A"/>
    <property type="chains" value="A=2-108"/>
</dbReference>
<dbReference type="PDBsum" id="1H7C"/>
<dbReference type="SMR" id="O75347"/>
<dbReference type="BioGRID" id="112765">
    <property type="interactions" value="110"/>
</dbReference>
<dbReference type="FunCoup" id="O75347">
    <property type="interactions" value="2141"/>
</dbReference>
<dbReference type="IntAct" id="O75347">
    <property type="interactions" value="23"/>
</dbReference>
<dbReference type="MINT" id="O75347"/>
<dbReference type="STRING" id="9606.ENSP00000306362"/>
<dbReference type="GlyGen" id="O75347">
    <property type="glycosylation" value="1 site, 1 O-linked glycan (1 site)"/>
</dbReference>
<dbReference type="iPTMnet" id="O75347"/>
<dbReference type="MetOSite" id="O75347"/>
<dbReference type="PhosphoSitePlus" id="O75347"/>
<dbReference type="BioMuta" id="TBCA"/>
<dbReference type="OGP" id="O75347"/>
<dbReference type="jPOST" id="O75347"/>
<dbReference type="MassIVE" id="O75347"/>
<dbReference type="PaxDb" id="9606-ENSP00000306362"/>
<dbReference type="PeptideAtlas" id="O75347"/>
<dbReference type="ProteomicsDB" id="49916">
    <molecule id="O75347-1"/>
</dbReference>
<dbReference type="ProteomicsDB" id="5068"/>
<dbReference type="Pumba" id="O75347"/>
<dbReference type="TopDownProteomics" id="O75347-1">
    <molecule id="O75347-1"/>
</dbReference>
<dbReference type="Antibodypedia" id="24499">
    <property type="antibodies" value="270 antibodies from 28 providers"/>
</dbReference>
<dbReference type="DNASU" id="6902"/>
<dbReference type="Ensembl" id="ENST00000306388.10">
    <molecule id="O75347-2"/>
    <property type="protein sequence ID" value="ENSP00000306362.6"/>
    <property type="gene ID" value="ENSG00000171530.15"/>
</dbReference>
<dbReference type="Ensembl" id="ENST00000380377.9">
    <molecule id="O75347-1"/>
    <property type="protein sequence ID" value="ENSP00000369736.4"/>
    <property type="gene ID" value="ENSG00000171530.15"/>
</dbReference>
<dbReference type="GeneID" id="6902"/>
<dbReference type="KEGG" id="hsa:6902"/>
<dbReference type="MANE-Select" id="ENST00000380377.9">
    <property type="protein sequence ID" value="ENSP00000369736.4"/>
    <property type="RefSeq nucleotide sequence ID" value="NM_004607.3"/>
    <property type="RefSeq protein sequence ID" value="NP_004598.1"/>
</dbReference>
<dbReference type="UCSC" id="uc003kfi.2">
    <molecule id="O75347-1"/>
    <property type="organism name" value="human"/>
</dbReference>
<dbReference type="AGR" id="HGNC:11579"/>
<dbReference type="CTD" id="6902"/>
<dbReference type="DisGeNET" id="6902"/>
<dbReference type="GeneCards" id="TBCA"/>
<dbReference type="HGNC" id="HGNC:11579">
    <property type="gene designation" value="TBCA"/>
</dbReference>
<dbReference type="HPA" id="ENSG00000171530">
    <property type="expression patterns" value="Low tissue specificity"/>
</dbReference>
<dbReference type="MIM" id="610058">
    <property type="type" value="gene"/>
</dbReference>
<dbReference type="neXtProt" id="NX_O75347"/>
<dbReference type="OpenTargets" id="ENSG00000171530"/>
<dbReference type="PharmGKB" id="PA36343"/>
<dbReference type="VEuPathDB" id="HostDB:ENSG00000171530"/>
<dbReference type="eggNOG" id="KOG3470">
    <property type="taxonomic scope" value="Eukaryota"/>
</dbReference>
<dbReference type="GeneTree" id="ENSGT00390000009710"/>
<dbReference type="HOGENOM" id="CLU_130569_1_1_1"/>
<dbReference type="InParanoid" id="O75347"/>
<dbReference type="OMA" id="VIQECIM"/>
<dbReference type="OrthoDB" id="296187at2759"/>
<dbReference type="PAN-GO" id="O75347">
    <property type="GO annotations" value="4 GO annotations based on evolutionary models"/>
</dbReference>
<dbReference type="PhylomeDB" id="O75347"/>
<dbReference type="TreeFam" id="TF313971"/>
<dbReference type="PathwayCommons" id="O75347"/>
<dbReference type="Reactome" id="R-HSA-389977">
    <property type="pathway name" value="Post-chaperonin tubulin folding pathway"/>
</dbReference>
<dbReference type="SignaLink" id="O75347"/>
<dbReference type="SIGNOR" id="O75347"/>
<dbReference type="BioGRID-ORCS" id="6902">
    <property type="hits" value="678 hits in 1161 CRISPR screens"/>
</dbReference>
<dbReference type="ChiTaRS" id="TBCA">
    <property type="organism name" value="human"/>
</dbReference>
<dbReference type="EvolutionaryTrace" id="O75347"/>
<dbReference type="GeneWiki" id="TBCA"/>
<dbReference type="GenomeRNAi" id="6902"/>
<dbReference type="Pharos" id="O75347">
    <property type="development level" value="Tbio"/>
</dbReference>
<dbReference type="PRO" id="PR:O75347"/>
<dbReference type="Proteomes" id="UP000005640">
    <property type="component" value="Chromosome 5"/>
</dbReference>
<dbReference type="RNAct" id="O75347">
    <property type="molecule type" value="protein"/>
</dbReference>
<dbReference type="Bgee" id="ENSG00000171530">
    <property type="expression patterns" value="Expressed in right adrenal gland cortex and 109 other cell types or tissues"/>
</dbReference>
<dbReference type="ExpressionAtlas" id="O75347">
    <property type="expression patterns" value="baseline and differential"/>
</dbReference>
<dbReference type="GO" id="GO:0005737">
    <property type="term" value="C:cytoplasm"/>
    <property type="evidence" value="ECO:0000304"/>
    <property type="project" value="UniProtKB"/>
</dbReference>
<dbReference type="GO" id="GO:0005874">
    <property type="term" value="C:microtubule"/>
    <property type="evidence" value="ECO:0007669"/>
    <property type="project" value="UniProtKB-KW"/>
</dbReference>
<dbReference type="GO" id="GO:0015630">
    <property type="term" value="C:microtubule cytoskeleton"/>
    <property type="evidence" value="ECO:0000314"/>
    <property type="project" value="HPA"/>
</dbReference>
<dbReference type="GO" id="GO:0005730">
    <property type="term" value="C:nucleolus"/>
    <property type="evidence" value="ECO:0000314"/>
    <property type="project" value="HPA"/>
</dbReference>
<dbReference type="GO" id="GO:0048487">
    <property type="term" value="F:beta-tubulin binding"/>
    <property type="evidence" value="ECO:0007669"/>
    <property type="project" value="InterPro"/>
</dbReference>
<dbReference type="GO" id="GO:0051087">
    <property type="term" value="F:protein-folding chaperone binding"/>
    <property type="evidence" value="ECO:0000304"/>
    <property type="project" value="ProtInc"/>
</dbReference>
<dbReference type="GO" id="GO:0003723">
    <property type="term" value="F:RNA binding"/>
    <property type="evidence" value="ECO:0007005"/>
    <property type="project" value="UniProtKB"/>
</dbReference>
<dbReference type="GO" id="GO:0015631">
    <property type="term" value="F:tubulin binding"/>
    <property type="evidence" value="ECO:0000318"/>
    <property type="project" value="GO_Central"/>
</dbReference>
<dbReference type="GO" id="GO:0007023">
    <property type="term" value="P:post-chaperonin tubulin folding pathway"/>
    <property type="evidence" value="ECO:0000304"/>
    <property type="project" value="ProtInc"/>
</dbReference>
<dbReference type="GO" id="GO:0006457">
    <property type="term" value="P:protein folding"/>
    <property type="evidence" value="ECO:0000318"/>
    <property type="project" value="GO_Central"/>
</dbReference>
<dbReference type="GO" id="GO:0007021">
    <property type="term" value="P:tubulin complex assembly"/>
    <property type="evidence" value="ECO:0000318"/>
    <property type="project" value="GO_Central"/>
</dbReference>
<dbReference type="FunFam" id="1.20.58.90:FF:000009">
    <property type="entry name" value="Tubulin-specific chaperone A"/>
    <property type="match status" value="1"/>
</dbReference>
<dbReference type="Gene3D" id="1.20.58.90">
    <property type="match status" value="1"/>
</dbReference>
<dbReference type="InterPro" id="IPR004226">
    <property type="entry name" value="TBCA"/>
</dbReference>
<dbReference type="InterPro" id="IPR036126">
    <property type="entry name" value="TBCA_sf"/>
</dbReference>
<dbReference type="PANTHER" id="PTHR21500">
    <property type="entry name" value="TUBULIN-SPECIFIC CHAPERONE A"/>
    <property type="match status" value="1"/>
</dbReference>
<dbReference type="PANTHER" id="PTHR21500:SF3">
    <property type="entry name" value="TUBULIN-SPECIFIC CHAPERONE A"/>
    <property type="match status" value="1"/>
</dbReference>
<dbReference type="Pfam" id="PF02970">
    <property type="entry name" value="TBCA"/>
    <property type="match status" value="1"/>
</dbReference>
<dbReference type="SUPFAM" id="SSF46988">
    <property type="entry name" value="Tubulin chaperone cofactor A"/>
    <property type="match status" value="1"/>
</dbReference>
<keyword id="KW-0002">3D-structure</keyword>
<keyword id="KW-0007">Acetylation</keyword>
<keyword id="KW-0025">Alternative splicing</keyword>
<keyword id="KW-0143">Chaperone</keyword>
<keyword id="KW-0963">Cytoplasm</keyword>
<keyword id="KW-0206">Cytoskeleton</keyword>
<keyword id="KW-0493">Microtubule</keyword>
<keyword id="KW-1267">Proteomics identification</keyword>
<keyword id="KW-1185">Reference proteome</keyword>
<organism>
    <name type="scientific">Homo sapiens</name>
    <name type="common">Human</name>
    <dbReference type="NCBI Taxonomy" id="9606"/>
    <lineage>
        <taxon>Eukaryota</taxon>
        <taxon>Metazoa</taxon>
        <taxon>Chordata</taxon>
        <taxon>Craniata</taxon>
        <taxon>Vertebrata</taxon>
        <taxon>Euteleostomi</taxon>
        <taxon>Mammalia</taxon>
        <taxon>Eutheria</taxon>
        <taxon>Euarchontoglires</taxon>
        <taxon>Primates</taxon>
        <taxon>Haplorrhini</taxon>
        <taxon>Catarrhini</taxon>
        <taxon>Hominidae</taxon>
        <taxon>Homo</taxon>
    </lineage>
</organism>
<comment type="function">
    <text>Tubulin-folding protein; involved in the early step of the tubulin folding pathway.</text>
</comment>
<comment type="subunit">
    <text>Supercomplex made of cofactors A to E. Cofactors A and D function by capturing and stabilizing tubulin in a quasi-native conformation. Cofactor E binds to the cofactor D-tubulin complex; interaction with cofactor C then causes the release of tubulin polypeptides that are committed to the native state.</text>
</comment>
<comment type="interaction">
    <interactant intactId="EBI-2686341">
        <id>O75347</id>
    </interactant>
    <interactant intactId="EBI-750109">
        <id>Q9NYB0</id>
        <label>TERF2IP</label>
    </interactant>
    <organismsDiffer>false</organismsDiffer>
    <experiments>2</experiments>
</comment>
<comment type="interaction">
    <interactant intactId="EBI-2686341">
        <id>O75347</id>
    </interactant>
    <interactant intactId="EBI-25475882">
        <id>PRO_0000449645</id>
        <dbReference type="UniProtKB" id="P0DTC1"/>
    </interactant>
    <organismsDiffer>true</organismsDiffer>
    <experiments>2</experiments>
</comment>
<comment type="subcellular location">
    <subcellularLocation>
        <location>Cytoplasm</location>
        <location>Cytoskeleton</location>
    </subcellularLocation>
</comment>
<comment type="alternative products">
    <event type="alternative splicing"/>
    <isoform>
        <id>O75347-1</id>
        <name>1</name>
        <sequence type="displayed"/>
    </isoform>
    <isoform>
        <id>O75347-2</id>
        <name>2</name>
        <sequence type="described" ref="VSP_056357"/>
    </isoform>
</comment>
<comment type="similarity">
    <text evidence="3">Belongs to the TBCA family.</text>
</comment>
<evidence type="ECO:0000250" key="1">
    <source>
        <dbReference type="UniProtKB" id="P80584"/>
    </source>
</evidence>
<evidence type="ECO:0000303" key="2">
    <source>
    </source>
</evidence>
<evidence type="ECO:0000305" key="3"/>
<evidence type="ECO:0007829" key="4">
    <source>
        <dbReference type="PDB" id="1H7C"/>
    </source>
</evidence>
<reference key="1">
    <citation type="journal article" date="1998" name="Proc. Natl. Acad. Sci. U.S.A.">
        <title>Identification of genes expressed in human CD34(+) hematopoietic stem/progenitor cells by expressed sequence tags and efficient full-length cDNA cloning.</title>
        <authorList>
            <person name="Mao M."/>
            <person name="Fu G."/>
            <person name="Wu J.-S."/>
            <person name="Zhang Q.-H."/>
            <person name="Zhou J."/>
            <person name="Kan L.-X."/>
            <person name="Huang Q.-H."/>
            <person name="He K.-L."/>
            <person name="Gu B.-W."/>
            <person name="Han Z.-G."/>
            <person name="Shen Y."/>
            <person name="Gu J."/>
            <person name="Yu Y.-P."/>
            <person name="Xu S.-H."/>
            <person name="Wang Y.-X."/>
            <person name="Chen S.-J."/>
            <person name="Chen Z."/>
        </authorList>
    </citation>
    <scope>NUCLEOTIDE SEQUENCE [LARGE SCALE MRNA] (ISOFORM 1)</scope>
    <source>
        <tissue>Umbilical cord blood</tissue>
    </source>
</reference>
<reference key="2">
    <citation type="submission" date="2003-05" db="EMBL/GenBank/DDBJ databases">
        <title>Cloning of human full-length CDSs in BD Creator(TM) system donor vector.</title>
        <authorList>
            <person name="Kalnine N."/>
            <person name="Chen X."/>
            <person name="Rolfs A."/>
            <person name="Halleck A."/>
            <person name="Hines L."/>
            <person name="Eisenstein S."/>
            <person name="Koundinya M."/>
            <person name="Raphael J."/>
            <person name="Moreira D."/>
            <person name="Kelley T."/>
            <person name="LaBaer J."/>
            <person name="Lin Y."/>
            <person name="Phelan M."/>
            <person name="Farmer A."/>
        </authorList>
    </citation>
    <scope>NUCLEOTIDE SEQUENCE [LARGE SCALE MRNA] (ISOFORM 1)</scope>
</reference>
<reference key="3">
    <citation type="journal article" date="2004" name="Nat. Genet.">
        <title>Complete sequencing and characterization of 21,243 full-length human cDNAs.</title>
        <authorList>
            <person name="Ota T."/>
            <person name="Suzuki Y."/>
            <person name="Nishikawa T."/>
            <person name="Otsuki T."/>
            <person name="Sugiyama T."/>
            <person name="Irie R."/>
            <person name="Wakamatsu A."/>
            <person name="Hayashi K."/>
            <person name="Sato H."/>
            <person name="Nagai K."/>
            <person name="Kimura K."/>
            <person name="Makita H."/>
            <person name="Sekine M."/>
            <person name="Obayashi M."/>
            <person name="Nishi T."/>
            <person name="Shibahara T."/>
            <person name="Tanaka T."/>
            <person name="Ishii S."/>
            <person name="Yamamoto J."/>
            <person name="Saito K."/>
            <person name="Kawai Y."/>
            <person name="Isono Y."/>
            <person name="Nakamura Y."/>
            <person name="Nagahari K."/>
            <person name="Murakami K."/>
            <person name="Yasuda T."/>
            <person name="Iwayanagi T."/>
            <person name="Wagatsuma M."/>
            <person name="Shiratori A."/>
            <person name="Sudo H."/>
            <person name="Hosoiri T."/>
            <person name="Kaku Y."/>
            <person name="Kodaira H."/>
            <person name="Kondo H."/>
            <person name="Sugawara M."/>
            <person name="Takahashi M."/>
            <person name="Kanda K."/>
            <person name="Yokoi T."/>
            <person name="Furuya T."/>
            <person name="Kikkawa E."/>
            <person name="Omura Y."/>
            <person name="Abe K."/>
            <person name="Kamihara K."/>
            <person name="Katsuta N."/>
            <person name="Sato K."/>
            <person name="Tanikawa M."/>
            <person name="Yamazaki M."/>
            <person name="Ninomiya K."/>
            <person name="Ishibashi T."/>
            <person name="Yamashita H."/>
            <person name="Murakawa K."/>
            <person name="Fujimori K."/>
            <person name="Tanai H."/>
            <person name="Kimata M."/>
            <person name="Watanabe M."/>
            <person name="Hiraoka S."/>
            <person name="Chiba Y."/>
            <person name="Ishida S."/>
            <person name="Ono Y."/>
            <person name="Takiguchi S."/>
            <person name="Watanabe S."/>
            <person name="Yosida M."/>
            <person name="Hotuta T."/>
            <person name="Kusano J."/>
            <person name="Kanehori K."/>
            <person name="Takahashi-Fujii A."/>
            <person name="Hara H."/>
            <person name="Tanase T.-O."/>
            <person name="Nomura Y."/>
            <person name="Togiya S."/>
            <person name="Komai F."/>
            <person name="Hara R."/>
            <person name="Takeuchi K."/>
            <person name="Arita M."/>
            <person name="Imose N."/>
            <person name="Musashino K."/>
            <person name="Yuuki H."/>
            <person name="Oshima A."/>
            <person name="Sasaki N."/>
            <person name="Aotsuka S."/>
            <person name="Yoshikawa Y."/>
            <person name="Matsunawa H."/>
            <person name="Ichihara T."/>
            <person name="Shiohata N."/>
            <person name="Sano S."/>
            <person name="Moriya S."/>
            <person name="Momiyama H."/>
            <person name="Satoh N."/>
            <person name="Takami S."/>
            <person name="Terashima Y."/>
            <person name="Suzuki O."/>
            <person name="Nakagawa S."/>
            <person name="Senoh A."/>
            <person name="Mizoguchi H."/>
            <person name="Goto Y."/>
            <person name="Shimizu F."/>
            <person name="Wakebe H."/>
            <person name="Hishigaki H."/>
            <person name="Watanabe T."/>
            <person name="Sugiyama A."/>
            <person name="Takemoto M."/>
            <person name="Kawakami B."/>
            <person name="Yamazaki M."/>
            <person name="Watanabe K."/>
            <person name="Kumagai A."/>
            <person name="Itakura S."/>
            <person name="Fukuzumi Y."/>
            <person name="Fujimori Y."/>
            <person name="Komiyama M."/>
            <person name="Tashiro H."/>
            <person name="Tanigami A."/>
            <person name="Fujiwara T."/>
            <person name="Ono T."/>
            <person name="Yamada K."/>
            <person name="Fujii Y."/>
            <person name="Ozaki K."/>
            <person name="Hirao M."/>
            <person name="Ohmori Y."/>
            <person name="Kawabata A."/>
            <person name="Hikiji T."/>
            <person name="Kobatake N."/>
            <person name="Inagaki H."/>
            <person name="Ikema Y."/>
            <person name="Okamoto S."/>
            <person name="Okitani R."/>
            <person name="Kawakami T."/>
            <person name="Noguchi S."/>
            <person name="Itoh T."/>
            <person name="Shigeta K."/>
            <person name="Senba T."/>
            <person name="Matsumura K."/>
            <person name="Nakajima Y."/>
            <person name="Mizuno T."/>
            <person name="Morinaga M."/>
            <person name="Sasaki M."/>
            <person name="Togashi T."/>
            <person name="Oyama M."/>
            <person name="Hata H."/>
            <person name="Watanabe M."/>
            <person name="Komatsu T."/>
            <person name="Mizushima-Sugano J."/>
            <person name="Satoh T."/>
            <person name="Shirai Y."/>
            <person name="Takahashi Y."/>
            <person name="Nakagawa K."/>
            <person name="Okumura K."/>
            <person name="Nagase T."/>
            <person name="Nomura N."/>
            <person name="Kikuchi H."/>
            <person name="Masuho Y."/>
            <person name="Yamashita R."/>
            <person name="Nakai K."/>
            <person name="Yada T."/>
            <person name="Nakamura Y."/>
            <person name="Ohara O."/>
            <person name="Isogai T."/>
            <person name="Sugano S."/>
        </authorList>
    </citation>
    <scope>NUCLEOTIDE SEQUENCE [LARGE SCALE MRNA] (ISOFORM 2)</scope>
</reference>
<reference key="4">
    <citation type="journal article" date="2004" name="Nature">
        <title>The DNA sequence and comparative analysis of human chromosome 5.</title>
        <authorList>
            <person name="Schmutz J."/>
            <person name="Martin J."/>
            <person name="Terry A."/>
            <person name="Couronne O."/>
            <person name="Grimwood J."/>
            <person name="Lowry S."/>
            <person name="Gordon L.A."/>
            <person name="Scott D."/>
            <person name="Xie G."/>
            <person name="Huang W."/>
            <person name="Hellsten U."/>
            <person name="Tran-Gyamfi M."/>
            <person name="She X."/>
            <person name="Prabhakar S."/>
            <person name="Aerts A."/>
            <person name="Altherr M."/>
            <person name="Bajorek E."/>
            <person name="Black S."/>
            <person name="Branscomb E."/>
            <person name="Caoile C."/>
            <person name="Challacombe J.F."/>
            <person name="Chan Y.M."/>
            <person name="Denys M."/>
            <person name="Detter J.C."/>
            <person name="Escobar J."/>
            <person name="Flowers D."/>
            <person name="Fotopulos D."/>
            <person name="Glavina T."/>
            <person name="Gomez M."/>
            <person name="Gonzales E."/>
            <person name="Goodstein D."/>
            <person name="Grigoriev I."/>
            <person name="Groza M."/>
            <person name="Hammon N."/>
            <person name="Hawkins T."/>
            <person name="Haydu L."/>
            <person name="Israni S."/>
            <person name="Jett J."/>
            <person name="Kadner K."/>
            <person name="Kimball H."/>
            <person name="Kobayashi A."/>
            <person name="Lopez F."/>
            <person name="Lou Y."/>
            <person name="Martinez D."/>
            <person name="Medina C."/>
            <person name="Morgan J."/>
            <person name="Nandkeshwar R."/>
            <person name="Noonan J.P."/>
            <person name="Pitluck S."/>
            <person name="Pollard M."/>
            <person name="Predki P."/>
            <person name="Priest J."/>
            <person name="Ramirez L."/>
            <person name="Retterer J."/>
            <person name="Rodriguez A."/>
            <person name="Rogers S."/>
            <person name="Salamov A."/>
            <person name="Salazar A."/>
            <person name="Thayer N."/>
            <person name="Tice H."/>
            <person name="Tsai M."/>
            <person name="Ustaszewska A."/>
            <person name="Vo N."/>
            <person name="Wheeler J."/>
            <person name="Wu K."/>
            <person name="Yang J."/>
            <person name="Dickson M."/>
            <person name="Cheng J.-F."/>
            <person name="Eichler E.E."/>
            <person name="Olsen A."/>
            <person name="Pennacchio L.A."/>
            <person name="Rokhsar D.S."/>
            <person name="Richardson P."/>
            <person name="Lucas S.M."/>
            <person name="Myers R.M."/>
            <person name="Rubin E.M."/>
        </authorList>
    </citation>
    <scope>NUCLEOTIDE SEQUENCE [LARGE SCALE GENOMIC DNA]</scope>
</reference>
<reference key="5">
    <citation type="journal article" date="2004" name="Genome Res.">
        <title>The status, quality, and expansion of the NIH full-length cDNA project: the Mammalian Gene Collection (MGC).</title>
        <authorList>
            <consortium name="The MGC Project Team"/>
        </authorList>
    </citation>
    <scope>NUCLEOTIDE SEQUENCE [LARGE SCALE MRNA] (ISOFORM 1)</scope>
    <source>
        <tissue>Ovary</tissue>
    </source>
</reference>
<reference key="6">
    <citation type="journal article" date="2011" name="BMC Syst. Biol.">
        <title>Initial characterization of the human central proteome.</title>
        <authorList>
            <person name="Burkard T.R."/>
            <person name="Planyavsky M."/>
            <person name="Kaupe I."/>
            <person name="Breitwieser F.P."/>
            <person name="Buerckstuemmer T."/>
            <person name="Bennett K.L."/>
            <person name="Superti-Furga G."/>
            <person name="Colinge J."/>
        </authorList>
    </citation>
    <scope>IDENTIFICATION BY MASS SPECTROMETRY [LARGE SCALE ANALYSIS]</scope>
</reference>
<reference key="7">
    <citation type="journal article" date="2012" name="J. Proteome Res.">
        <title>Resveratrol-induced changes of the human adipocyte secretion profile.</title>
        <authorList>
            <person name="Rosenow A."/>
            <person name="Noben J.P."/>
            <person name="Jocken J."/>
            <person name="Kallendrusch S."/>
            <person name="Fischer-Posovszky P."/>
            <person name="Mariman E.C."/>
            <person name="Renes J."/>
        </authorList>
    </citation>
    <scope>IDENTIFICATION BY MASS SPECTROMETRY [LARGE SCALE ANALYSIS]</scope>
</reference>
<reference key="8">
    <citation type="journal article" date="2002" name="J. Mol. Biol.">
        <title>Three-dimensional structure of human tubulin chaperone cofactor A.</title>
        <authorList>
            <person name="Guasch A."/>
            <person name="Aloria K."/>
            <person name="Perez R."/>
            <person name="Avila J."/>
            <person name="Zabala J.C."/>
            <person name="Coll M."/>
        </authorList>
    </citation>
    <scope>X-RAY CRYSTALLOGRAPHY (1.8 ANGSTROMS)</scope>
</reference>
<gene>
    <name type="primary">TBCA</name>
</gene>
<protein>
    <recommendedName>
        <fullName>Tubulin-specific chaperone A</fullName>
    </recommendedName>
    <alternativeName>
        <fullName>TCP1-chaperonin cofactor A</fullName>
    </alternativeName>
    <alternativeName>
        <fullName>Tubulin-folding cofactor A</fullName>
        <shortName>CFA</shortName>
    </alternativeName>
</protein>
<feature type="initiator methionine" description="Removed" evidence="1">
    <location>
        <position position="1"/>
    </location>
</feature>
<feature type="chain" id="PRO_0000080039" description="Tubulin-specific chaperone A">
    <location>
        <begin position="2"/>
        <end position="108"/>
    </location>
</feature>
<feature type="modified residue" description="N-acetylalanine" evidence="1">
    <location>
        <position position="2"/>
    </location>
</feature>
<feature type="splice variant" id="VSP_056357" description="In isoform 2." evidence="2">
    <original>ENEKDLEEAEEYKEARLVLDSVKLEA</original>
    <variation>VSKDFCVMFKFFFSIQYMESQKFKYLTLRTSWQYFLFTCPLYRYILK</variation>
    <location>
        <begin position="83"/>
        <end position="108"/>
    </location>
</feature>
<feature type="helix" evidence="4">
    <location>
        <begin position="5"/>
        <end position="44"/>
    </location>
</feature>
<feature type="helix" evidence="4">
    <location>
        <begin position="49"/>
        <end position="61"/>
    </location>
</feature>
<feature type="helix" evidence="4">
    <location>
        <begin position="64"/>
        <end position="84"/>
    </location>
</feature>
<feature type="helix" evidence="4">
    <location>
        <begin position="86"/>
        <end position="88"/>
    </location>
</feature>
<feature type="helix" evidence="4">
    <location>
        <begin position="92"/>
        <end position="105"/>
    </location>
</feature>
<sequence>MADPRVRQIKIKTGVVKRLVKEKVMYEKEAKQQEEKIEKMRAEDGENYDIKKQAEILQESRMMIPDCQRRLEAAYLDLQRILENEKDLEEAEEYKEARLVLDSVKLEA</sequence>
<name>TBCA_HUMAN</name>
<accession>O75347</accession>
<accession>B4DT30</accession>
<proteinExistence type="evidence at protein level"/>